<reference key="1">
    <citation type="journal article" date="2008" name="PLoS ONE">
        <title>Genome sequence of the saprophyte Leptospira biflexa provides insights into the evolution of Leptospira and the pathogenesis of leptospirosis.</title>
        <authorList>
            <person name="Picardeau M."/>
            <person name="Bulach D.M."/>
            <person name="Bouchier C."/>
            <person name="Zuerner R.L."/>
            <person name="Zidane N."/>
            <person name="Wilson P.J."/>
            <person name="Creno S."/>
            <person name="Kuczek E.S."/>
            <person name="Bommezzadri S."/>
            <person name="Davis J.C."/>
            <person name="McGrath A."/>
            <person name="Johnson M.J."/>
            <person name="Boursaux-Eude C."/>
            <person name="Seemann T."/>
            <person name="Rouy Z."/>
            <person name="Coppel R.L."/>
            <person name="Rood J.I."/>
            <person name="Lajus A."/>
            <person name="Davies J.K."/>
            <person name="Medigue C."/>
            <person name="Adler B."/>
        </authorList>
    </citation>
    <scope>NUCLEOTIDE SEQUENCE [LARGE SCALE GENOMIC DNA]</scope>
    <source>
        <strain>Patoc 1 / ATCC 23582 / Paris</strain>
    </source>
</reference>
<proteinExistence type="inferred from homology"/>
<gene>
    <name type="ordered locus">LEPBI_I0293</name>
</gene>
<evidence type="ECO:0000255" key="1">
    <source>
        <dbReference type="HAMAP-Rule" id="MF_00386"/>
    </source>
</evidence>
<organism>
    <name type="scientific">Leptospira biflexa serovar Patoc (strain Patoc 1 / ATCC 23582 / Paris)</name>
    <dbReference type="NCBI Taxonomy" id="456481"/>
    <lineage>
        <taxon>Bacteria</taxon>
        <taxon>Pseudomonadati</taxon>
        <taxon>Spirochaetota</taxon>
        <taxon>Spirochaetia</taxon>
        <taxon>Leptospirales</taxon>
        <taxon>Leptospiraceae</taxon>
        <taxon>Leptospira</taxon>
    </lineage>
</organism>
<accession>B0SJ14</accession>
<name>YIDD_LEPBP</name>
<protein>
    <recommendedName>
        <fullName evidence="1">Putative membrane protein insertion efficiency factor</fullName>
    </recommendedName>
</protein>
<keyword id="KW-0997">Cell inner membrane</keyword>
<keyword id="KW-1003">Cell membrane</keyword>
<keyword id="KW-0472">Membrane</keyword>
<keyword id="KW-1185">Reference proteome</keyword>
<feature type="chain" id="PRO_1000197759" description="Putative membrane protein insertion efficiency factor">
    <location>
        <begin position="1"/>
        <end position="75"/>
    </location>
</feature>
<dbReference type="EMBL" id="CP000786">
    <property type="protein sequence ID" value="ABZ96437.1"/>
    <property type="molecule type" value="Genomic_DNA"/>
</dbReference>
<dbReference type="STRING" id="456481.LEPBI_I0293"/>
<dbReference type="KEGG" id="lbi:LEPBI_I0293"/>
<dbReference type="HOGENOM" id="CLU_144811_6_0_12"/>
<dbReference type="OrthoDB" id="9801753at2"/>
<dbReference type="BioCyc" id="LBIF456481:LEPBI_RS18805-MONOMER"/>
<dbReference type="Proteomes" id="UP000001847">
    <property type="component" value="Chromosome I"/>
</dbReference>
<dbReference type="GO" id="GO:0005886">
    <property type="term" value="C:plasma membrane"/>
    <property type="evidence" value="ECO:0007669"/>
    <property type="project" value="UniProtKB-SubCell"/>
</dbReference>
<dbReference type="HAMAP" id="MF_00386">
    <property type="entry name" value="UPF0161_YidD"/>
    <property type="match status" value="1"/>
</dbReference>
<dbReference type="InterPro" id="IPR002696">
    <property type="entry name" value="Membr_insert_effic_factor_YidD"/>
</dbReference>
<dbReference type="NCBIfam" id="TIGR00278">
    <property type="entry name" value="membrane protein insertion efficiency factor YidD"/>
    <property type="match status" value="1"/>
</dbReference>
<dbReference type="PANTHER" id="PTHR33383">
    <property type="entry name" value="MEMBRANE PROTEIN INSERTION EFFICIENCY FACTOR-RELATED"/>
    <property type="match status" value="1"/>
</dbReference>
<dbReference type="PANTHER" id="PTHR33383:SF1">
    <property type="entry name" value="MEMBRANE PROTEIN INSERTION EFFICIENCY FACTOR-RELATED"/>
    <property type="match status" value="1"/>
</dbReference>
<dbReference type="Pfam" id="PF01809">
    <property type="entry name" value="YidD"/>
    <property type="match status" value="1"/>
</dbReference>
<dbReference type="SMART" id="SM01234">
    <property type="entry name" value="Haemolytic"/>
    <property type="match status" value="1"/>
</dbReference>
<comment type="function">
    <text evidence="1">Could be involved in insertion of integral membrane proteins into the membrane.</text>
</comment>
<comment type="subcellular location">
    <subcellularLocation>
        <location evidence="1">Cell inner membrane</location>
        <topology evidence="1">Peripheral membrane protein</topology>
        <orientation evidence="1">Cytoplasmic side</orientation>
    </subcellularLocation>
</comment>
<comment type="similarity">
    <text evidence="1">Belongs to the UPF0161 family.</text>
</comment>
<sequence>MNRLFLVLIFLYKKLLSPFLPPSCRFTPSCSEYAKQAFETYPWYKAFVLSVVRISKCHPYHEGGHDPLPKSYNKS</sequence>